<organism>
    <name type="scientific">Xanthomonas oryzae pv. oryzae (strain MAFF 311018)</name>
    <dbReference type="NCBI Taxonomy" id="342109"/>
    <lineage>
        <taxon>Bacteria</taxon>
        <taxon>Pseudomonadati</taxon>
        <taxon>Pseudomonadota</taxon>
        <taxon>Gammaproteobacteria</taxon>
        <taxon>Lysobacterales</taxon>
        <taxon>Lysobacteraceae</taxon>
        <taxon>Xanthomonas</taxon>
    </lineage>
</organism>
<proteinExistence type="inferred from homology"/>
<feature type="chain" id="PRO_1000061664" description="Coenzyme PQQ synthesis protein B">
    <location>
        <begin position="1"/>
        <end position="299"/>
    </location>
</feature>
<sequence>MRIIVLGSAAGGGHPQWNCHTPASLRAWQQADGAQRRTQASIAVSADGERWVLINASPDFRQQILATPALWPQQGLRHSPIKAVLLTSGEIDHIAGLLSMRESQPFALHASRRVLDLLAQNPIFDAVNPQYVSRQPFTLNAPLTVSGLQLTPFSVPGKVPLFMESRSGGDLAGSQEETLGLTIDDSQHRVHYIPGCAAMTDALRARLHGAELVFFDGTLWRDDEMVQLGISQKTGQRMGHMSIDGPEGTIAAFAPLNVARKIFIHLNTTNPVLNTQSPEFATARASGWEVAHDGLEIAL</sequence>
<reference key="1">
    <citation type="journal article" date="2005" name="Jpn. Agric. Res. Q.">
        <title>Genome sequence of Xanthomonas oryzae pv. oryzae suggests contribution of large numbers of effector genes and insertion sequences to its race diversity.</title>
        <authorList>
            <person name="Ochiai H."/>
            <person name="Inoue Y."/>
            <person name="Takeya M."/>
            <person name="Sasaki A."/>
            <person name="Kaku H."/>
        </authorList>
    </citation>
    <scope>NUCLEOTIDE SEQUENCE [LARGE SCALE GENOMIC DNA]</scope>
    <source>
        <strain>MAFF 311018</strain>
    </source>
</reference>
<comment type="function">
    <text evidence="1">May be involved in the transport of PQQ or its precursor to the periplasm.</text>
</comment>
<comment type="pathway">
    <text evidence="1">Cofactor biosynthesis; pyrroloquinoline quinone biosynthesis.</text>
</comment>
<comment type="similarity">
    <text evidence="1">Belongs to the PqqB family.</text>
</comment>
<gene>
    <name evidence="1" type="primary">pqqB</name>
    <name type="ordered locus">XOO1636</name>
</gene>
<protein>
    <recommendedName>
        <fullName evidence="1">Coenzyme PQQ synthesis protein B</fullName>
    </recommendedName>
    <alternativeName>
        <fullName evidence="1">Pyrroloquinoline quinone biosynthesis protein B</fullName>
    </alternativeName>
</protein>
<evidence type="ECO:0000255" key="1">
    <source>
        <dbReference type="HAMAP-Rule" id="MF_00653"/>
    </source>
</evidence>
<accession>Q2P4Y6</accession>
<name>PQQB_XANOM</name>
<keyword id="KW-0884">PQQ biosynthesis</keyword>
<keyword id="KW-0813">Transport</keyword>
<dbReference type="EMBL" id="AP008229">
    <property type="protein sequence ID" value="BAE68391.1"/>
    <property type="molecule type" value="Genomic_DNA"/>
</dbReference>
<dbReference type="RefSeq" id="WP_011258497.1">
    <property type="nucleotide sequence ID" value="NC_007705.1"/>
</dbReference>
<dbReference type="SMR" id="Q2P4Y6"/>
<dbReference type="KEGG" id="xom:XOO1636"/>
<dbReference type="HOGENOM" id="CLU_061120_0_0_6"/>
<dbReference type="UniPathway" id="UPA00539"/>
<dbReference type="GO" id="GO:0018189">
    <property type="term" value="P:pyrroloquinoline quinone biosynthetic process"/>
    <property type="evidence" value="ECO:0007669"/>
    <property type="project" value="UniProtKB-UniRule"/>
</dbReference>
<dbReference type="CDD" id="cd16274">
    <property type="entry name" value="PQQB-like_MBL-fold"/>
    <property type="match status" value="1"/>
</dbReference>
<dbReference type="Gene3D" id="3.60.15.10">
    <property type="entry name" value="Ribonuclease Z/Hydroxyacylglutathione hydrolase-like"/>
    <property type="match status" value="1"/>
</dbReference>
<dbReference type="HAMAP" id="MF_00653">
    <property type="entry name" value="PQQ_syn_PqqB"/>
    <property type="match status" value="1"/>
</dbReference>
<dbReference type="InterPro" id="IPR001279">
    <property type="entry name" value="Metallo-B-lactamas"/>
</dbReference>
<dbReference type="InterPro" id="IPR011842">
    <property type="entry name" value="PQQ_synth_PqqB"/>
</dbReference>
<dbReference type="InterPro" id="IPR036866">
    <property type="entry name" value="RibonucZ/Hydroxyglut_hydro"/>
</dbReference>
<dbReference type="NCBIfam" id="TIGR02108">
    <property type="entry name" value="PQQ_syn_pqqB"/>
    <property type="match status" value="1"/>
</dbReference>
<dbReference type="PANTHER" id="PTHR42663:SF7">
    <property type="entry name" value="COENZYME PQQ SYNTHESIS PROTEIN B"/>
    <property type="match status" value="1"/>
</dbReference>
<dbReference type="PANTHER" id="PTHR42663">
    <property type="entry name" value="HYDROLASE C777.06C-RELATED-RELATED"/>
    <property type="match status" value="1"/>
</dbReference>
<dbReference type="Pfam" id="PF12706">
    <property type="entry name" value="Lactamase_B_2"/>
    <property type="match status" value="1"/>
</dbReference>
<dbReference type="SUPFAM" id="SSF56281">
    <property type="entry name" value="Metallo-hydrolase/oxidoreductase"/>
    <property type="match status" value="1"/>
</dbReference>